<reference key="1">
    <citation type="submission" date="2006-08" db="EMBL/GenBank/DDBJ databases">
        <authorList>
            <consortium name="NIH - Zebrafish Gene Collection (ZGC) project"/>
        </authorList>
    </citation>
    <scope>NUCLEOTIDE SEQUENCE [LARGE SCALE MRNA]</scope>
</reference>
<proteinExistence type="evidence at transcript level"/>
<evidence type="ECO:0000250" key="1">
    <source>
        <dbReference type="UniProtKB" id="Q3SZT6"/>
    </source>
</evidence>
<evidence type="ECO:0000250" key="2">
    <source>
        <dbReference type="UniProtKB" id="Q5VTH2"/>
    </source>
</evidence>
<evidence type="ECO:0000250" key="3">
    <source>
        <dbReference type="UniProtKB" id="Q6P8X9"/>
    </source>
</evidence>
<evidence type="ECO:0000256" key="4">
    <source>
        <dbReference type="SAM" id="MobiDB-lite"/>
    </source>
</evidence>
<evidence type="ECO:0000305" key="5"/>
<gene>
    <name evidence="3" type="primary">cfap126</name>
    <name evidence="3" type="synonym">fltp</name>
    <name type="ORF">zgc:152916</name>
</gene>
<organism>
    <name type="scientific">Danio rerio</name>
    <name type="common">Zebrafish</name>
    <name type="synonym">Brachydanio rerio</name>
    <dbReference type="NCBI Taxonomy" id="7955"/>
    <lineage>
        <taxon>Eukaryota</taxon>
        <taxon>Metazoa</taxon>
        <taxon>Chordata</taxon>
        <taxon>Craniata</taxon>
        <taxon>Vertebrata</taxon>
        <taxon>Euteleostomi</taxon>
        <taxon>Actinopterygii</taxon>
        <taxon>Neopterygii</taxon>
        <taxon>Teleostei</taxon>
        <taxon>Ostariophysi</taxon>
        <taxon>Cypriniformes</taxon>
        <taxon>Danionidae</taxon>
        <taxon>Danioninae</taxon>
        <taxon>Danio</taxon>
    </lineage>
</organism>
<accession>Q0P4F6</accession>
<feature type="chain" id="PRO_0000316974" description="Protein Flattop">
    <location>
        <begin position="1"/>
        <end position="213"/>
    </location>
</feature>
<feature type="region of interest" description="Disordered" evidence="4">
    <location>
        <begin position="127"/>
        <end position="213"/>
    </location>
</feature>
<feature type="compositionally biased region" description="Polar residues" evidence="4">
    <location>
        <begin position="151"/>
        <end position="213"/>
    </location>
</feature>
<protein>
    <recommendedName>
        <fullName evidence="5">Protein Flattop</fullName>
    </recommendedName>
    <alternativeName>
        <fullName evidence="5">Cilia- and flagella-associated protein 126</fullName>
    </alternativeName>
</protein>
<keyword id="KW-1003">Cell membrane</keyword>
<keyword id="KW-0966">Cell projection</keyword>
<keyword id="KW-0970">Cilium biogenesis/degradation</keyword>
<keyword id="KW-0963">Cytoplasm</keyword>
<keyword id="KW-0206">Cytoskeleton</keyword>
<keyword id="KW-0472">Membrane</keyword>
<keyword id="KW-1185">Reference proteome</keyword>
<comment type="function">
    <text evidence="2 3">Microtubule inner protein (MIP) part of the dynein-decorated doublet microtubules (DMTs) in cilia axoneme. Acts as a regulator of cilium basal body docking and positioning in mono- and multiciliated cells. Regulates basal body docking and cilia formation in multiciliated lung cells. Regulates kinocilium positioning and stereocilia bundle morphogenesis in the inner ear.</text>
</comment>
<comment type="subcellular location">
    <subcellularLocation>
        <location evidence="3">Cytoplasm</location>
        <location evidence="3">Cytoskeleton</location>
        <location evidence="3">Cilium basal body</location>
    </subcellularLocation>
    <subcellularLocation>
        <location evidence="3">Cell projection</location>
        <location evidence="3">Cilium</location>
    </subcellularLocation>
    <subcellularLocation>
        <location evidence="3">Apical cell membrane</location>
    </subcellularLocation>
    <subcellularLocation>
        <location evidence="1">Cytoplasm</location>
        <location evidence="1">Cytoskeleton</location>
        <location evidence="1">Cilium axoneme</location>
    </subcellularLocation>
    <text evidence="1 3">Localizes to the apical cell membrane, the basal body and the primary cilium in monociliated node cells (By similarity).</text>
</comment>
<comment type="similarity">
    <text evidence="5">Belongs to the Flattop family.</text>
</comment>
<sequence>MSTSYSANQYESAFKSQKLQNWTIPKQFKERPSAAEGYTTFIATDRGHLLPGVRTKHRSAWPAFQGTWDLPRRIPPVSMNPTARSQVGQDRLMTWGQMKITTKQAHKGPGDSQAMNRNSHDVENINVDQPAEQSKISIDPDENQPEKPKSQHIQDQSRPASQQAQPIPENLNINQSRPASQRSQKAPSRPATQQNQAEFRPPTHNSRPASQEK</sequence>
<dbReference type="EMBL" id="BC122100">
    <property type="protein sequence ID" value="AAI22101.1"/>
    <property type="molecule type" value="mRNA"/>
</dbReference>
<dbReference type="RefSeq" id="NP_001038883.1">
    <property type="nucleotide sequence ID" value="NM_001045418.1"/>
</dbReference>
<dbReference type="SMR" id="Q0P4F6"/>
<dbReference type="FunCoup" id="Q0P4F6">
    <property type="interactions" value="56"/>
</dbReference>
<dbReference type="STRING" id="7955.ENSDARP00000083775"/>
<dbReference type="PaxDb" id="7955-ENSDARP00000083775"/>
<dbReference type="GeneID" id="751706"/>
<dbReference type="KEGG" id="dre:751706"/>
<dbReference type="AGR" id="ZFIN:ZDB-GENE-060825-357"/>
<dbReference type="CTD" id="257177"/>
<dbReference type="ZFIN" id="ZDB-GENE-060825-357">
    <property type="gene designation" value="cfap126"/>
</dbReference>
<dbReference type="eggNOG" id="ENOG502S5M4">
    <property type="taxonomic scope" value="Eukaryota"/>
</dbReference>
<dbReference type="InParanoid" id="Q0P4F6"/>
<dbReference type="OrthoDB" id="521617at2759"/>
<dbReference type="PhylomeDB" id="Q0P4F6"/>
<dbReference type="PRO" id="PR:Q0P4F6"/>
<dbReference type="Proteomes" id="UP000000437">
    <property type="component" value="Alternate scaffold 23"/>
</dbReference>
<dbReference type="Proteomes" id="UP000000437">
    <property type="component" value="Chromosome 23"/>
</dbReference>
<dbReference type="GO" id="GO:0016324">
    <property type="term" value="C:apical plasma membrane"/>
    <property type="evidence" value="ECO:0000250"/>
    <property type="project" value="UniProtKB"/>
</dbReference>
<dbReference type="GO" id="GO:0005879">
    <property type="term" value="C:axonemal microtubule"/>
    <property type="evidence" value="ECO:0000250"/>
    <property type="project" value="UniProtKB"/>
</dbReference>
<dbReference type="GO" id="GO:0036064">
    <property type="term" value="C:ciliary basal body"/>
    <property type="evidence" value="ECO:0000250"/>
    <property type="project" value="UniProtKB"/>
</dbReference>
<dbReference type="GO" id="GO:0005929">
    <property type="term" value="C:cilium"/>
    <property type="evidence" value="ECO:0000250"/>
    <property type="project" value="UniProtKB"/>
</dbReference>
<dbReference type="GO" id="GO:0044782">
    <property type="term" value="P:cilium organization"/>
    <property type="evidence" value="ECO:0000250"/>
    <property type="project" value="UniProtKB"/>
</dbReference>
<dbReference type="CDD" id="cd23705">
    <property type="entry name" value="Flattop"/>
    <property type="match status" value="1"/>
</dbReference>
<dbReference type="InterPro" id="IPR038797">
    <property type="entry name" value="Fltp"/>
</dbReference>
<dbReference type="PANTHER" id="PTHR34639">
    <property type="entry name" value="PROTEIN FLATTOP"/>
    <property type="match status" value="1"/>
</dbReference>
<dbReference type="PANTHER" id="PTHR34639:SF1">
    <property type="entry name" value="PROTEIN FLATTOP"/>
    <property type="match status" value="1"/>
</dbReference>
<dbReference type="Pfam" id="PF22611">
    <property type="entry name" value="CFAP126"/>
    <property type="match status" value="1"/>
</dbReference>
<name>FLTOP_DANRE</name>